<name>NEP1_THESM</name>
<accession>C6A116</accession>
<evidence type="ECO:0000255" key="1">
    <source>
        <dbReference type="HAMAP-Rule" id="MF_00554"/>
    </source>
</evidence>
<evidence type="ECO:0000305" key="2"/>
<feature type="chain" id="PRO_1000212011" description="Ribosomal RNA small subunit methyltransferase Nep1">
    <location>
        <begin position="1"/>
        <end position="220"/>
    </location>
</feature>
<feature type="binding site" evidence="1">
    <location>
        <position position="178"/>
    </location>
    <ligand>
        <name>S-adenosyl-L-methionine</name>
        <dbReference type="ChEBI" id="CHEBI:59789"/>
    </ligand>
</feature>
<feature type="binding site" evidence="1">
    <location>
        <position position="183"/>
    </location>
    <ligand>
        <name>S-adenosyl-L-methionine</name>
        <dbReference type="ChEBI" id="CHEBI:59789"/>
    </ligand>
</feature>
<feature type="binding site" evidence="1">
    <location>
        <begin position="196"/>
        <end position="201"/>
    </location>
    <ligand>
        <name>S-adenosyl-L-methionine</name>
        <dbReference type="ChEBI" id="CHEBI:59789"/>
    </ligand>
</feature>
<feature type="site" description="Interaction with substrate rRNA" evidence="1">
    <location>
        <position position="60"/>
    </location>
</feature>
<feature type="site" description="Stabilizes Arg-60" evidence="1">
    <location>
        <position position="62"/>
    </location>
</feature>
<feature type="site" description="Interaction with substrate rRNA" evidence="1">
    <location>
        <position position="101"/>
    </location>
</feature>
<feature type="site" description="Interaction with substrate rRNA" evidence="1">
    <location>
        <position position="104"/>
    </location>
</feature>
<feature type="site" description="Interaction with substrate rRNA" evidence="1">
    <location>
        <position position="108"/>
    </location>
</feature>
<comment type="function">
    <text evidence="1">Methyltransferase involved in ribosomal biogenesis. Specifically catalyzes the N1-methylation of the pseudouridine corresponding to position 914 in M.jannaschii 16S rRNA.</text>
</comment>
<comment type="catalytic activity">
    <reaction evidence="1">
        <text>a pseudouridine in rRNA + S-adenosyl-L-methionine = an N(1)-methylpseudouridine in rRNA + S-adenosyl-L-homocysteine + H(+)</text>
        <dbReference type="Rhea" id="RHEA:46696"/>
        <dbReference type="Rhea" id="RHEA-COMP:11634"/>
        <dbReference type="Rhea" id="RHEA-COMP:13933"/>
        <dbReference type="ChEBI" id="CHEBI:15378"/>
        <dbReference type="ChEBI" id="CHEBI:57856"/>
        <dbReference type="ChEBI" id="CHEBI:59789"/>
        <dbReference type="ChEBI" id="CHEBI:65314"/>
        <dbReference type="ChEBI" id="CHEBI:74890"/>
    </reaction>
</comment>
<comment type="subunit">
    <text evidence="1">Homodimer.</text>
</comment>
<comment type="similarity">
    <text evidence="2">Belongs to the class IV-like SAM-binding methyltransferase superfamily. RNA methyltransferase NEP1 family.</text>
</comment>
<sequence>MLHLIIADSELELVPKELQNHPSIISHAKRRFKKPEEILLDSTYHHTALKSLKDGERRGRPDIVHLCLINALESILNKEGKLRVYVHTRNNEVIYIKPETRLPRNYNRFVGLMESLFKNRVIPKDLALLRIENKTLSEIIGDIGPDAVFIMHENGVLMSPQSFGRKLNEYISPAVIVGGFPHGDFLSVLEGEKISIYKEPLMAWSVVNEVLINYEGSLLW</sequence>
<keyword id="KW-0489">Methyltransferase</keyword>
<keyword id="KW-1185">Reference proteome</keyword>
<keyword id="KW-0690">Ribosome biogenesis</keyword>
<keyword id="KW-0694">RNA-binding</keyword>
<keyword id="KW-0698">rRNA processing</keyword>
<keyword id="KW-0699">rRNA-binding</keyword>
<keyword id="KW-0949">S-adenosyl-L-methionine</keyword>
<keyword id="KW-0808">Transferase</keyword>
<gene>
    <name evidence="1" type="primary">nep1</name>
    <name type="ordered locus">TSIB_0244</name>
</gene>
<dbReference type="EC" id="2.1.1.-" evidence="1"/>
<dbReference type="EMBL" id="CP001463">
    <property type="protein sequence ID" value="ACS89311.1"/>
    <property type="molecule type" value="Genomic_DNA"/>
</dbReference>
<dbReference type="RefSeq" id="WP_012766272.1">
    <property type="nucleotide sequence ID" value="NC_012883.1"/>
</dbReference>
<dbReference type="SMR" id="C6A116"/>
<dbReference type="STRING" id="604354.TSIB_0244"/>
<dbReference type="GeneID" id="8095217"/>
<dbReference type="KEGG" id="tsi:TSIB_0244"/>
<dbReference type="eggNOG" id="arCOG04122">
    <property type="taxonomic scope" value="Archaea"/>
</dbReference>
<dbReference type="HOGENOM" id="CLU_055846_1_3_2"/>
<dbReference type="OrthoDB" id="7612at2157"/>
<dbReference type="Proteomes" id="UP000009079">
    <property type="component" value="Chromosome"/>
</dbReference>
<dbReference type="GO" id="GO:0070037">
    <property type="term" value="F:rRNA (pseudouridine) methyltransferase activity"/>
    <property type="evidence" value="ECO:0007669"/>
    <property type="project" value="UniProtKB-UniRule"/>
</dbReference>
<dbReference type="GO" id="GO:0019843">
    <property type="term" value="F:rRNA binding"/>
    <property type="evidence" value="ECO:0007669"/>
    <property type="project" value="UniProtKB-UniRule"/>
</dbReference>
<dbReference type="GO" id="GO:0070475">
    <property type="term" value="P:rRNA base methylation"/>
    <property type="evidence" value="ECO:0007669"/>
    <property type="project" value="InterPro"/>
</dbReference>
<dbReference type="CDD" id="cd18088">
    <property type="entry name" value="Nep1-like"/>
    <property type="match status" value="1"/>
</dbReference>
<dbReference type="FunFam" id="3.40.1280.10:FF:000042">
    <property type="entry name" value="Ribosomal RNA small subunit methyltransferase Nep1"/>
    <property type="match status" value="1"/>
</dbReference>
<dbReference type="Gene3D" id="3.40.1280.10">
    <property type="match status" value="1"/>
</dbReference>
<dbReference type="HAMAP" id="MF_00554">
    <property type="entry name" value="NEP1"/>
    <property type="match status" value="1"/>
</dbReference>
<dbReference type="InterPro" id="IPR029028">
    <property type="entry name" value="Alpha/beta_knot_MTases"/>
</dbReference>
<dbReference type="InterPro" id="IPR005304">
    <property type="entry name" value="Rbsml_bgen_MeTrfase_EMG1/NEP1"/>
</dbReference>
<dbReference type="InterPro" id="IPR023503">
    <property type="entry name" value="Ribosome_NEP1_arc"/>
</dbReference>
<dbReference type="InterPro" id="IPR029026">
    <property type="entry name" value="tRNA_m1G_MTases_N"/>
</dbReference>
<dbReference type="NCBIfam" id="NF003205">
    <property type="entry name" value="PRK04171.1-5"/>
    <property type="match status" value="1"/>
</dbReference>
<dbReference type="NCBIfam" id="NF003207">
    <property type="entry name" value="PRK04171.2-2"/>
    <property type="match status" value="1"/>
</dbReference>
<dbReference type="PANTHER" id="PTHR12636">
    <property type="entry name" value="NEP1/MRA1"/>
    <property type="match status" value="1"/>
</dbReference>
<dbReference type="PANTHER" id="PTHR12636:SF5">
    <property type="entry name" value="RIBOSOMAL RNA SMALL SUBUNIT METHYLTRANSFERASE NEP1"/>
    <property type="match status" value="1"/>
</dbReference>
<dbReference type="Pfam" id="PF03587">
    <property type="entry name" value="EMG1"/>
    <property type="match status" value="1"/>
</dbReference>
<dbReference type="SUPFAM" id="SSF75217">
    <property type="entry name" value="alpha/beta knot"/>
    <property type="match status" value="1"/>
</dbReference>
<organism>
    <name type="scientific">Thermococcus sibiricus (strain DSM 12597 / MM 739)</name>
    <dbReference type="NCBI Taxonomy" id="604354"/>
    <lineage>
        <taxon>Archaea</taxon>
        <taxon>Methanobacteriati</taxon>
        <taxon>Methanobacteriota</taxon>
        <taxon>Thermococci</taxon>
        <taxon>Thermococcales</taxon>
        <taxon>Thermococcaceae</taxon>
        <taxon>Thermococcus</taxon>
    </lineage>
</organism>
<proteinExistence type="inferred from homology"/>
<reference key="1">
    <citation type="journal article" date="2009" name="Appl. Environ. Microbiol.">
        <title>Metabolic versatility and indigenous origin of the archaeon Thermococcus sibiricus, isolated from a siberian oil reservoir, as revealed by genome analysis.</title>
        <authorList>
            <person name="Mardanov A.V."/>
            <person name="Ravin N.V."/>
            <person name="Svetlitchnyi V.A."/>
            <person name="Beletsky A.V."/>
            <person name="Miroshnichenko M.L."/>
            <person name="Bonch-Osmolovskaya E.A."/>
            <person name="Skryabin K.G."/>
        </authorList>
    </citation>
    <scope>NUCLEOTIDE SEQUENCE [LARGE SCALE GENOMIC DNA]</scope>
    <source>
        <strain>DSM 12597 / MM 739</strain>
    </source>
</reference>
<protein>
    <recommendedName>
        <fullName evidence="1">Ribosomal RNA small subunit methyltransferase Nep1</fullName>
        <ecNumber evidence="1">2.1.1.-</ecNumber>
    </recommendedName>
    <alternativeName>
        <fullName evidence="1">16S rRNA (pseudouridine-N1-)-methyltransferase Nep1</fullName>
    </alternativeName>
</protein>